<keyword id="KW-0067">ATP-binding</keyword>
<keyword id="KW-0131">Cell cycle</keyword>
<keyword id="KW-0132">Cell division</keyword>
<keyword id="KW-0418">Kinase</keyword>
<keyword id="KW-0460">Magnesium</keyword>
<keyword id="KW-0479">Metal-binding</keyword>
<keyword id="KW-0547">Nucleotide-binding</keyword>
<keyword id="KW-1185">Reference proteome</keyword>
<keyword id="KW-0723">Serine/threonine-protein kinase</keyword>
<keyword id="KW-0808">Transferase</keyword>
<proteinExistence type="evidence at protein level"/>
<comment type="function">
    <text evidence="4">Protein kinase essential for cell division. Plays a key role in initiation of septum formation and cytokinesis.</text>
</comment>
<comment type="catalytic activity">
    <reaction>
        <text>L-seryl-[protein] + ATP = O-phospho-L-seryl-[protein] + ADP + H(+)</text>
        <dbReference type="Rhea" id="RHEA:17989"/>
        <dbReference type="Rhea" id="RHEA-COMP:9863"/>
        <dbReference type="Rhea" id="RHEA-COMP:11604"/>
        <dbReference type="ChEBI" id="CHEBI:15378"/>
        <dbReference type="ChEBI" id="CHEBI:29999"/>
        <dbReference type="ChEBI" id="CHEBI:30616"/>
        <dbReference type="ChEBI" id="CHEBI:83421"/>
        <dbReference type="ChEBI" id="CHEBI:456216"/>
        <dbReference type="EC" id="2.7.11.1"/>
    </reaction>
</comment>
<comment type="catalytic activity">
    <reaction>
        <text>L-threonyl-[protein] + ATP = O-phospho-L-threonyl-[protein] + ADP + H(+)</text>
        <dbReference type="Rhea" id="RHEA:46608"/>
        <dbReference type="Rhea" id="RHEA-COMP:11060"/>
        <dbReference type="Rhea" id="RHEA-COMP:11605"/>
        <dbReference type="ChEBI" id="CHEBI:15378"/>
        <dbReference type="ChEBI" id="CHEBI:30013"/>
        <dbReference type="ChEBI" id="CHEBI:30616"/>
        <dbReference type="ChEBI" id="CHEBI:61977"/>
        <dbReference type="ChEBI" id="CHEBI:456216"/>
        <dbReference type="EC" id="2.7.11.1"/>
    </reaction>
</comment>
<comment type="cofactor">
    <cofactor>
        <name>Mg(2+)</name>
        <dbReference type="ChEBI" id="CHEBI:18420"/>
    </cofactor>
</comment>
<comment type="subunit">
    <text evidence="5">Interacts with spg1. Seems to interact with cdc11.</text>
</comment>
<comment type="similarity">
    <text evidence="1">Belongs to the protein kinase superfamily. Ser/Thr protein kinase family. CDC7 subfamily.</text>
</comment>
<feature type="chain" id="PRO_0000085765" description="Cell division control protein 7">
    <location>
        <begin position="1"/>
        <end position="1062"/>
    </location>
</feature>
<feature type="domain" description="Protein kinase" evidence="1">
    <location>
        <begin position="9"/>
        <end position="259"/>
    </location>
</feature>
<feature type="region of interest" description="Disordered" evidence="3">
    <location>
        <begin position="296"/>
        <end position="331"/>
    </location>
</feature>
<feature type="region of interest" description="Disordered" evidence="3">
    <location>
        <begin position="361"/>
        <end position="394"/>
    </location>
</feature>
<feature type="region of interest" description="Disordered" evidence="3">
    <location>
        <begin position="1038"/>
        <end position="1062"/>
    </location>
</feature>
<feature type="compositionally biased region" description="Polar residues" evidence="3">
    <location>
        <begin position="296"/>
        <end position="310"/>
    </location>
</feature>
<feature type="compositionally biased region" description="Polar residues" evidence="3">
    <location>
        <begin position="376"/>
        <end position="394"/>
    </location>
</feature>
<feature type="active site" description="Proton acceptor" evidence="1 2">
    <location>
        <position position="131"/>
    </location>
</feature>
<feature type="binding site" evidence="1">
    <location>
        <begin position="15"/>
        <end position="23"/>
    </location>
    <ligand>
        <name>ATP</name>
        <dbReference type="ChEBI" id="CHEBI:30616"/>
    </ligand>
</feature>
<feature type="binding site" evidence="1">
    <location>
        <position position="38"/>
    </location>
    <ligand>
        <name>ATP</name>
        <dbReference type="ChEBI" id="CHEBI:30616"/>
    </ligand>
</feature>
<dbReference type="EC" id="2.7.11.1"/>
<dbReference type="EMBL" id="X78799">
    <property type="protein sequence ID" value="CAA55382.1"/>
    <property type="molecule type" value="Genomic_DNA"/>
</dbReference>
<dbReference type="EMBL" id="CU329671">
    <property type="protein sequence ID" value="CAB36886.1"/>
    <property type="molecule type" value="Genomic_DNA"/>
</dbReference>
<dbReference type="PIR" id="S46367">
    <property type="entry name" value="S46367"/>
</dbReference>
<dbReference type="RefSeq" id="NP_596340.1">
    <property type="nucleotide sequence ID" value="NM_001022261.2"/>
</dbReference>
<dbReference type="SMR" id="P41892"/>
<dbReference type="BioGRID" id="277185">
    <property type="interactions" value="49"/>
</dbReference>
<dbReference type="FunCoup" id="P41892">
    <property type="interactions" value="534"/>
</dbReference>
<dbReference type="STRING" id="284812.P41892"/>
<dbReference type="iPTMnet" id="P41892"/>
<dbReference type="PaxDb" id="4896-SPBC21.06c.1"/>
<dbReference type="EnsemblFungi" id="SPBC21.06c.1">
    <property type="protein sequence ID" value="SPBC21.06c.1:pep"/>
    <property type="gene ID" value="SPBC21.06c"/>
</dbReference>
<dbReference type="GeneID" id="2540660"/>
<dbReference type="KEGG" id="spo:2540660"/>
<dbReference type="PomBase" id="SPBC21.06c">
    <property type="gene designation" value="cdc7"/>
</dbReference>
<dbReference type="VEuPathDB" id="FungiDB:SPBC21.06c"/>
<dbReference type="eggNOG" id="KOG0198">
    <property type="taxonomic scope" value="Eukaryota"/>
</dbReference>
<dbReference type="HOGENOM" id="CLU_001872_2_1_1"/>
<dbReference type="InParanoid" id="P41892"/>
<dbReference type="OMA" id="VKQIKLV"/>
<dbReference type="PhylomeDB" id="P41892"/>
<dbReference type="BRENDA" id="2.7.11.24">
    <property type="organism ID" value="5613"/>
</dbReference>
<dbReference type="BRENDA" id="2.7.12.2">
    <property type="organism ID" value="5613"/>
</dbReference>
<dbReference type="CD-CODE" id="576F0A76">
    <property type="entry name" value="Centrosome"/>
</dbReference>
<dbReference type="PRO" id="PR:P41892"/>
<dbReference type="Proteomes" id="UP000002485">
    <property type="component" value="Chromosome II"/>
</dbReference>
<dbReference type="GO" id="GO:0005737">
    <property type="term" value="C:cytoplasm"/>
    <property type="evidence" value="ECO:0000318"/>
    <property type="project" value="GO_Central"/>
</dbReference>
<dbReference type="GO" id="GO:0044732">
    <property type="term" value="C:mitotic spindle pole body"/>
    <property type="evidence" value="ECO:0000314"/>
    <property type="project" value="PomBase"/>
</dbReference>
<dbReference type="GO" id="GO:0071958">
    <property type="term" value="C:new mitotic spindle pole body"/>
    <property type="evidence" value="ECO:0000314"/>
    <property type="project" value="PomBase"/>
</dbReference>
<dbReference type="GO" id="GO:0071957">
    <property type="term" value="C:old mitotic spindle pole body"/>
    <property type="evidence" value="ECO:0000314"/>
    <property type="project" value="PomBase"/>
</dbReference>
<dbReference type="GO" id="GO:0005524">
    <property type="term" value="F:ATP binding"/>
    <property type="evidence" value="ECO:0007669"/>
    <property type="project" value="UniProtKB-KW"/>
</dbReference>
<dbReference type="GO" id="GO:0046872">
    <property type="term" value="F:metal ion binding"/>
    <property type="evidence" value="ECO:0007669"/>
    <property type="project" value="UniProtKB-KW"/>
</dbReference>
<dbReference type="GO" id="GO:0106310">
    <property type="term" value="F:protein serine kinase activity"/>
    <property type="evidence" value="ECO:0007669"/>
    <property type="project" value="RHEA"/>
</dbReference>
<dbReference type="GO" id="GO:0004674">
    <property type="term" value="F:protein serine/threonine kinase activity"/>
    <property type="evidence" value="ECO:0000315"/>
    <property type="project" value="PomBase"/>
</dbReference>
<dbReference type="GO" id="GO:0051301">
    <property type="term" value="P:cell division"/>
    <property type="evidence" value="ECO:0007669"/>
    <property type="project" value="UniProtKB-KW"/>
</dbReference>
<dbReference type="GO" id="GO:0140281">
    <property type="term" value="P:positive regulation of mitotic division septum assembly"/>
    <property type="evidence" value="ECO:0000315"/>
    <property type="project" value="PomBase"/>
</dbReference>
<dbReference type="GO" id="GO:0031028">
    <property type="term" value="P:septation initiation signaling"/>
    <property type="evidence" value="ECO:0000315"/>
    <property type="project" value="PomBase"/>
</dbReference>
<dbReference type="CDD" id="cd06627">
    <property type="entry name" value="STKc_Cdc7_like"/>
    <property type="match status" value="1"/>
</dbReference>
<dbReference type="FunFam" id="1.10.510.10:FF:000571">
    <property type="entry name" value="Maternal embryonic leucine zipper kinase"/>
    <property type="match status" value="1"/>
</dbReference>
<dbReference type="Gene3D" id="1.25.10.10">
    <property type="entry name" value="Leucine-rich Repeat Variant"/>
    <property type="match status" value="2"/>
</dbReference>
<dbReference type="Gene3D" id="1.10.510.10">
    <property type="entry name" value="Transferase(Phosphotransferase) domain 1"/>
    <property type="match status" value="1"/>
</dbReference>
<dbReference type="InterPro" id="IPR011989">
    <property type="entry name" value="ARM-like"/>
</dbReference>
<dbReference type="InterPro" id="IPR016024">
    <property type="entry name" value="ARM-type_fold"/>
</dbReference>
<dbReference type="InterPro" id="IPR011009">
    <property type="entry name" value="Kinase-like_dom_sf"/>
</dbReference>
<dbReference type="InterPro" id="IPR000719">
    <property type="entry name" value="Prot_kinase_dom"/>
</dbReference>
<dbReference type="InterPro" id="IPR017441">
    <property type="entry name" value="Protein_kinase_ATP_BS"/>
</dbReference>
<dbReference type="InterPro" id="IPR008271">
    <property type="entry name" value="Ser/Thr_kinase_AS"/>
</dbReference>
<dbReference type="InterPro" id="IPR050629">
    <property type="entry name" value="STE20/SPS1-PAK"/>
</dbReference>
<dbReference type="PANTHER" id="PTHR48012:SF26">
    <property type="entry name" value="SERINE_THREONINE-PROTEIN KINASE DDB_G0283821-RELATED"/>
    <property type="match status" value="1"/>
</dbReference>
<dbReference type="PANTHER" id="PTHR48012">
    <property type="entry name" value="STERILE20-LIKE KINASE, ISOFORM B-RELATED"/>
    <property type="match status" value="1"/>
</dbReference>
<dbReference type="Pfam" id="PF00069">
    <property type="entry name" value="Pkinase"/>
    <property type="match status" value="1"/>
</dbReference>
<dbReference type="SMART" id="SM00220">
    <property type="entry name" value="S_TKc"/>
    <property type="match status" value="1"/>
</dbReference>
<dbReference type="SUPFAM" id="SSF48371">
    <property type="entry name" value="ARM repeat"/>
    <property type="match status" value="1"/>
</dbReference>
<dbReference type="SUPFAM" id="SSF56112">
    <property type="entry name" value="Protein kinase-like (PK-like)"/>
    <property type="match status" value="1"/>
</dbReference>
<dbReference type="PROSITE" id="PS00107">
    <property type="entry name" value="PROTEIN_KINASE_ATP"/>
    <property type="match status" value="1"/>
</dbReference>
<dbReference type="PROSITE" id="PS50011">
    <property type="entry name" value="PROTEIN_KINASE_DOM"/>
    <property type="match status" value="1"/>
</dbReference>
<dbReference type="PROSITE" id="PS00108">
    <property type="entry name" value="PROTEIN_KINASE_ST"/>
    <property type="match status" value="1"/>
</dbReference>
<evidence type="ECO:0000255" key="1">
    <source>
        <dbReference type="PROSITE-ProRule" id="PRU00159"/>
    </source>
</evidence>
<evidence type="ECO:0000255" key="2">
    <source>
        <dbReference type="PROSITE-ProRule" id="PRU10027"/>
    </source>
</evidence>
<evidence type="ECO:0000256" key="3">
    <source>
        <dbReference type="SAM" id="MobiDB-lite"/>
    </source>
</evidence>
<evidence type="ECO:0000269" key="4">
    <source>
    </source>
</evidence>
<evidence type="ECO:0000269" key="5">
    <source>
    </source>
</evidence>
<name>CDC7_SCHPO</name>
<reference key="1">
    <citation type="journal article" date="1994" name="EMBO J.">
        <title>The cdc7 protein kinase is a dosage dependent regulator of septum formation in fission yeast.</title>
        <authorList>
            <person name="Fankhauser C."/>
            <person name="Simanis V."/>
        </authorList>
    </citation>
    <scope>NUCLEOTIDE SEQUENCE [GENOMIC DNA]</scope>
    <scope>FUNCTION</scope>
    <source>
        <strain>972 / ATCC 24843</strain>
    </source>
</reference>
<reference key="2">
    <citation type="journal article" date="2002" name="Nature">
        <title>The genome sequence of Schizosaccharomyces pombe.</title>
        <authorList>
            <person name="Wood V."/>
            <person name="Gwilliam R."/>
            <person name="Rajandream M.A."/>
            <person name="Lyne M.H."/>
            <person name="Lyne R."/>
            <person name="Stewart A."/>
            <person name="Sgouros J.G."/>
            <person name="Peat N."/>
            <person name="Hayles J."/>
            <person name="Baker S.G."/>
            <person name="Basham D."/>
            <person name="Bowman S."/>
            <person name="Brooks K."/>
            <person name="Brown D."/>
            <person name="Brown S."/>
            <person name="Chillingworth T."/>
            <person name="Churcher C.M."/>
            <person name="Collins M."/>
            <person name="Connor R."/>
            <person name="Cronin A."/>
            <person name="Davis P."/>
            <person name="Feltwell T."/>
            <person name="Fraser A."/>
            <person name="Gentles S."/>
            <person name="Goble A."/>
            <person name="Hamlin N."/>
            <person name="Harris D.E."/>
            <person name="Hidalgo J."/>
            <person name="Hodgson G."/>
            <person name="Holroyd S."/>
            <person name="Hornsby T."/>
            <person name="Howarth S."/>
            <person name="Huckle E.J."/>
            <person name="Hunt S."/>
            <person name="Jagels K."/>
            <person name="James K.D."/>
            <person name="Jones L."/>
            <person name="Jones M."/>
            <person name="Leather S."/>
            <person name="McDonald S."/>
            <person name="McLean J."/>
            <person name="Mooney P."/>
            <person name="Moule S."/>
            <person name="Mungall K.L."/>
            <person name="Murphy L.D."/>
            <person name="Niblett D."/>
            <person name="Odell C."/>
            <person name="Oliver K."/>
            <person name="O'Neil S."/>
            <person name="Pearson D."/>
            <person name="Quail M.A."/>
            <person name="Rabbinowitsch E."/>
            <person name="Rutherford K.M."/>
            <person name="Rutter S."/>
            <person name="Saunders D."/>
            <person name="Seeger K."/>
            <person name="Sharp S."/>
            <person name="Skelton J."/>
            <person name="Simmonds M.N."/>
            <person name="Squares R."/>
            <person name="Squares S."/>
            <person name="Stevens K."/>
            <person name="Taylor K."/>
            <person name="Taylor R.G."/>
            <person name="Tivey A."/>
            <person name="Walsh S.V."/>
            <person name="Warren T."/>
            <person name="Whitehead S."/>
            <person name="Woodward J.R."/>
            <person name="Volckaert G."/>
            <person name="Aert R."/>
            <person name="Robben J."/>
            <person name="Grymonprez B."/>
            <person name="Weltjens I."/>
            <person name="Vanstreels E."/>
            <person name="Rieger M."/>
            <person name="Schaefer M."/>
            <person name="Mueller-Auer S."/>
            <person name="Gabel C."/>
            <person name="Fuchs M."/>
            <person name="Duesterhoeft A."/>
            <person name="Fritzc C."/>
            <person name="Holzer E."/>
            <person name="Moestl D."/>
            <person name="Hilbert H."/>
            <person name="Borzym K."/>
            <person name="Langer I."/>
            <person name="Beck A."/>
            <person name="Lehrach H."/>
            <person name="Reinhardt R."/>
            <person name="Pohl T.M."/>
            <person name="Eger P."/>
            <person name="Zimmermann W."/>
            <person name="Wedler H."/>
            <person name="Wambutt R."/>
            <person name="Purnelle B."/>
            <person name="Goffeau A."/>
            <person name="Cadieu E."/>
            <person name="Dreano S."/>
            <person name="Gloux S."/>
            <person name="Lelaure V."/>
            <person name="Mottier S."/>
            <person name="Galibert F."/>
            <person name="Aves S.J."/>
            <person name="Xiang Z."/>
            <person name="Hunt C."/>
            <person name="Moore K."/>
            <person name="Hurst S.M."/>
            <person name="Lucas M."/>
            <person name="Rochet M."/>
            <person name="Gaillardin C."/>
            <person name="Tallada V.A."/>
            <person name="Garzon A."/>
            <person name="Thode G."/>
            <person name="Daga R.R."/>
            <person name="Cruzado L."/>
            <person name="Jimenez J."/>
            <person name="Sanchez M."/>
            <person name="del Rey F."/>
            <person name="Benito J."/>
            <person name="Dominguez A."/>
            <person name="Revuelta J.L."/>
            <person name="Moreno S."/>
            <person name="Armstrong J."/>
            <person name="Forsburg S.L."/>
            <person name="Cerutti L."/>
            <person name="Lowe T."/>
            <person name="McCombie W.R."/>
            <person name="Paulsen I."/>
            <person name="Potashkin J."/>
            <person name="Shpakovski G.V."/>
            <person name="Ussery D."/>
            <person name="Barrell B.G."/>
            <person name="Nurse P."/>
        </authorList>
    </citation>
    <scope>NUCLEOTIDE SEQUENCE [LARGE SCALE GENOMIC DNA]</scope>
    <source>
        <strain>972 / ATCC 24843</strain>
    </source>
</reference>
<reference key="3">
    <citation type="journal article" date="1997" name="Genes Dev.">
        <title>The Spg1p GTPase is an essential, dosage-dependent inducer of septum formation in Schizosaccharomyces pombe.</title>
        <authorList>
            <person name="Schmidt S."/>
            <person name="Sohrmann M."/>
            <person name="Hofmann K."/>
            <person name="Woollard A."/>
            <person name="Simanis V."/>
        </authorList>
    </citation>
    <scope>INTERACTION WITH SPG1</scope>
</reference>
<organism>
    <name type="scientific">Schizosaccharomyces pombe (strain 972 / ATCC 24843)</name>
    <name type="common">Fission yeast</name>
    <dbReference type="NCBI Taxonomy" id="284812"/>
    <lineage>
        <taxon>Eukaryota</taxon>
        <taxon>Fungi</taxon>
        <taxon>Dikarya</taxon>
        <taxon>Ascomycota</taxon>
        <taxon>Taphrinomycotina</taxon>
        <taxon>Schizosaccharomycetes</taxon>
        <taxon>Schizosaccharomycetales</taxon>
        <taxon>Schizosaccharomycetaceae</taxon>
        <taxon>Schizosaccharomyces</taxon>
    </lineage>
</organism>
<accession>P41892</accession>
<protein>
    <recommendedName>
        <fullName>Cell division control protein 7</fullName>
        <ecNumber>2.7.11.1</ecNumber>
    </recommendedName>
</protein>
<sequence length="1062" mass="119291">MHNIQASSITLGDCLGKGAFGAVYRGLNIKNGETVAVKKVKLSKMLKSDLSVIKMEIDLLKNLDHPNIVKYRGSYQTNDSLCIILEYCENGSLRSICKNFGKIPENLVALYTFQVLQGLLYLHNQGVIHRDIKGANILTTKDGTIKLADFGVATKINALEDHSVVGSPYWMAPEVIELVGATTASDIWSVGCTVIELLDGNPPYYDLDPTSALFRMVKDEHPPLPSNISSAAKSFLMQCFQKDPNLRIKTRKLLKHPWVIMNQTSSKFSDAIDEVQKYNERVKESTLTAIIEPTSNRINPTLHSGRQSSYHMPESPKTPIAESPDHDNWDNEFQGTLKISDDVLKKSEHFMDFCSNFKGKNNSSSITSSPSKSRHAFNSDQISESNNFNASPLSTPLKAQFDPSKPALNRSIDHQKTPQHKRYLSTEFKENIPDGIEKFVETPRDSEFTDIFPTSSIKVQGLRKETGLGTLVLNKCYGSWNNEENEDGEESDIFDSIETNLENLDIENNIALDKRTHLASLLSSLLGSLRDKNIGSKDTTVSQIASILSEDLSLKREIIQAHGILPLLETLREIKTPDVQLLLLKLINTVAFDDHTTLQKVCFAGGLPLMLSFSNREHSFEFRYESAIFIQQMYRTSALTLQMFLSSNGLNSLLLFIKEDYGTNRDFVFVGVEGIWKLLRQQDYIPKNDICTMVVNDSLEPLTKAMLKALATDDDSSRMSLTRICEILLALSQADNYVKESLLCESALRRILRILLYLPHSDMAITLQFFKQLSMVPSSLSLLRKVHIIPLLTHILGDSKIEKGRKEIRSEALAALFNVCKLDKKSQEEAVISGAIPLLQEVIIKDRLFKEFALPILLALPQAGPVSRIYLWQNKCLDFFLSLLSDLNWQSAVFDTIASWLQFELREVQRVLAEKRNVQLVLKVFCISQSASSNRMLDTLGRVCQISPRLAASYGQPIIFQKFKEKLTHKGTKPIVVLNIFQIMKSMCEASSQSVAYIAHCGLPDVVANLNQTSDSVLVKELAKDLLKYLKVPQGPINEHKSPISKPHMPPPRWQPKQPLTQ</sequence>
<gene>
    <name type="primary">cdc7</name>
    <name type="ORF">SPBC21.06c</name>
</gene>